<protein>
    <recommendedName>
        <fullName evidence="1">Enoyl-[acyl-carrier-protein] reductase [NADH]</fullName>
        <shortName evidence="1">ENR</shortName>
        <ecNumber evidence="1">1.3.1.9</ecNumber>
    </recommendedName>
</protein>
<sequence length="396" mass="42800">MVIKPKIRGFICTNAHPVGCEAHVNEQIAYVKAQTSATSGPKNVLVIGASTGYGLASRITSTFGHDAKTLGIFFEKPPTEKKTGSAGWYNTAAFVKAADEAGIYAKNINGDAFSHEIKAKAIEAIKADMGTVDLVVYSLASPRRTDPDTGEVYSSTLKPIGQSVTTKNLNTSKRVIDEVSVEAANDAEIQGTIDVMGGADWELWMNALGEAGVLAEGVKTVAYTYIGKELTWPIYGKATIGKAKEDLDRAATAINAATADLNGQARVTSLNAVVTQASSAIPIMPLYISAMFKVMKADGTYEGCIEQIANLFKENIYSDSPRLDEEGRFRQNYKELEDSVQKRVTDIWNSVDTDTIDELTDYVAYHQEFLKLFGFGIDGVDYDADVSPEVAINNLT</sequence>
<comment type="function">
    <text evidence="1">Involved in the final reduction of the elongation cycle of fatty acid synthesis (FAS II). Catalyzes the reduction of a carbon-carbon double bond in an enoyl moiety that is covalently linked to an acyl carrier protein (ACP).</text>
</comment>
<comment type="catalytic activity">
    <reaction evidence="1">
        <text>a 2,3-saturated acyl-[ACP] + NAD(+) = a (2E)-enoyl-[ACP] + NADH + H(+)</text>
        <dbReference type="Rhea" id="RHEA:10240"/>
        <dbReference type="Rhea" id="RHEA-COMP:9925"/>
        <dbReference type="Rhea" id="RHEA-COMP:9926"/>
        <dbReference type="ChEBI" id="CHEBI:15378"/>
        <dbReference type="ChEBI" id="CHEBI:57540"/>
        <dbReference type="ChEBI" id="CHEBI:57945"/>
        <dbReference type="ChEBI" id="CHEBI:78784"/>
        <dbReference type="ChEBI" id="CHEBI:78785"/>
        <dbReference type="EC" id="1.3.1.9"/>
    </reaction>
</comment>
<comment type="pathway">
    <text evidence="1">Lipid metabolism; fatty acid biosynthesis.</text>
</comment>
<comment type="subunit">
    <text evidence="1">Monomer.</text>
</comment>
<comment type="similarity">
    <text evidence="1">Belongs to the TER reductase family.</text>
</comment>
<proteinExistence type="inferred from homology"/>
<gene>
    <name evidence="1" type="primary">fabV</name>
    <name type="ordered locus">CPS_0713</name>
</gene>
<dbReference type="EC" id="1.3.1.9" evidence="1"/>
<dbReference type="EMBL" id="CP000083">
    <property type="protein sequence ID" value="AAZ26513.1"/>
    <property type="molecule type" value="Genomic_DNA"/>
</dbReference>
<dbReference type="RefSeq" id="WP_011041563.1">
    <property type="nucleotide sequence ID" value="NC_003910.7"/>
</dbReference>
<dbReference type="SMR" id="Q488Q1"/>
<dbReference type="STRING" id="167879.CPS_0713"/>
<dbReference type="KEGG" id="cps:CPS_0713"/>
<dbReference type="eggNOG" id="COG3007">
    <property type="taxonomic scope" value="Bacteria"/>
</dbReference>
<dbReference type="HOGENOM" id="CLU_057698_1_0_6"/>
<dbReference type="UniPathway" id="UPA00094"/>
<dbReference type="Proteomes" id="UP000000547">
    <property type="component" value="Chromosome"/>
</dbReference>
<dbReference type="GO" id="GO:0004318">
    <property type="term" value="F:enoyl-[acyl-carrier-protein] reductase (NADH) activity"/>
    <property type="evidence" value="ECO:0007669"/>
    <property type="project" value="UniProtKB-UniRule"/>
</dbReference>
<dbReference type="GO" id="GO:0051287">
    <property type="term" value="F:NAD binding"/>
    <property type="evidence" value="ECO:0007669"/>
    <property type="project" value="UniProtKB-UniRule"/>
</dbReference>
<dbReference type="GO" id="GO:0050343">
    <property type="term" value="F:trans-2-enoyl-CoA reductase (NADH) activity"/>
    <property type="evidence" value="ECO:0007669"/>
    <property type="project" value="TreeGrafter"/>
</dbReference>
<dbReference type="GO" id="GO:0006633">
    <property type="term" value="P:fatty acid biosynthetic process"/>
    <property type="evidence" value="ECO:0007669"/>
    <property type="project" value="UniProtKB-UniRule"/>
</dbReference>
<dbReference type="FunFam" id="3.40.50.720:FF:000221">
    <property type="entry name" value="Enoyl-[acyl-carrier-protein] reductase [NADH]"/>
    <property type="match status" value="1"/>
</dbReference>
<dbReference type="Gene3D" id="3.40.50.720">
    <property type="entry name" value="NAD(P)-binding Rossmann-like Domain"/>
    <property type="match status" value="1"/>
</dbReference>
<dbReference type="HAMAP" id="MF_01838">
    <property type="entry name" value="FabV_reductase"/>
    <property type="match status" value="1"/>
</dbReference>
<dbReference type="InterPro" id="IPR024906">
    <property type="entry name" value="Eno_Rdtase_FAD-bd_dom"/>
</dbReference>
<dbReference type="InterPro" id="IPR024910">
    <property type="entry name" value="Enoyl-CoA_Rdtase_cat_dom"/>
</dbReference>
<dbReference type="InterPro" id="IPR050048">
    <property type="entry name" value="FabV-like_NADH_b"/>
</dbReference>
<dbReference type="InterPro" id="IPR010758">
    <property type="entry name" value="Trans-2-enoyl-CoA_reductase"/>
</dbReference>
<dbReference type="NCBIfam" id="NF043048">
    <property type="entry name" value="EnoyACPredFabV"/>
    <property type="match status" value="1"/>
</dbReference>
<dbReference type="NCBIfam" id="NF010177">
    <property type="entry name" value="PRK13656.1"/>
    <property type="match status" value="1"/>
</dbReference>
<dbReference type="PANTHER" id="PTHR37480">
    <property type="entry name" value="ENOYL-[ACYL-CARRIER-PROTEIN] REDUCTASE [NADH]"/>
    <property type="match status" value="1"/>
</dbReference>
<dbReference type="PANTHER" id="PTHR37480:SF1">
    <property type="entry name" value="ENOYL-[ACYL-CARRIER-PROTEIN] REDUCTASE [NADH]"/>
    <property type="match status" value="1"/>
</dbReference>
<dbReference type="Pfam" id="PF07055">
    <property type="entry name" value="Eno-Rase_FAD_bd"/>
    <property type="match status" value="1"/>
</dbReference>
<dbReference type="Pfam" id="PF12242">
    <property type="entry name" value="Eno-Rase_NADH_b"/>
    <property type="match status" value="1"/>
</dbReference>
<dbReference type="Pfam" id="PF12241">
    <property type="entry name" value="Enoyl_reductase"/>
    <property type="match status" value="1"/>
</dbReference>
<keyword id="KW-0275">Fatty acid biosynthesis</keyword>
<keyword id="KW-0276">Fatty acid metabolism</keyword>
<keyword id="KW-0444">Lipid biosynthesis</keyword>
<keyword id="KW-0443">Lipid metabolism</keyword>
<keyword id="KW-0520">NAD</keyword>
<keyword id="KW-0560">Oxidoreductase</keyword>
<accession>Q488Q1</accession>
<reference key="1">
    <citation type="journal article" date="2005" name="Proc. Natl. Acad. Sci. U.S.A.">
        <title>The psychrophilic lifestyle as revealed by the genome sequence of Colwellia psychrerythraea 34H through genomic and proteomic analyses.</title>
        <authorList>
            <person name="Methe B.A."/>
            <person name="Nelson K.E."/>
            <person name="Deming J.W."/>
            <person name="Momen B."/>
            <person name="Melamud E."/>
            <person name="Zhang X."/>
            <person name="Moult J."/>
            <person name="Madupu R."/>
            <person name="Nelson W.C."/>
            <person name="Dodson R.J."/>
            <person name="Brinkac L.M."/>
            <person name="Daugherty S.C."/>
            <person name="Durkin A.S."/>
            <person name="DeBoy R.T."/>
            <person name="Kolonay J.F."/>
            <person name="Sullivan S.A."/>
            <person name="Zhou L."/>
            <person name="Davidsen T.M."/>
            <person name="Wu M."/>
            <person name="Huston A.L."/>
            <person name="Lewis M."/>
            <person name="Weaver B."/>
            <person name="Weidman J.F."/>
            <person name="Khouri H."/>
            <person name="Utterback T.R."/>
            <person name="Feldblyum T.V."/>
            <person name="Fraser C.M."/>
        </authorList>
    </citation>
    <scope>NUCLEOTIDE SEQUENCE [LARGE SCALE GENOMIC DNA]</scope>
    <source>
        <strain>34H / ATCC BAA-681</strain>
    </source>
</reference>
<feature type="chain" id="PRO_1000070482" description="Enoyl-[acyl-carrier-protein] reductase [NADH]">
    <location>
        <begin position="1"/>
        <end position="396"/>
    </location>
</feature>
<feature type="active site" description="Proton donor" evidence="1">
    <location>
        <position position="235"/>
    </location>
</feature>
<feature type="binding site" evidence="1">
    <location>
        <begin position="48"/>
        <end position="53"/>
    </location>
    <ligand>
        <name>NAD(+)</name>
        <dbReference type="ChEBI" id="CHEBI:57540"/>
    </ligand>
</feature>
<feature type="binding site" evidence="1">
    <location>
        <begin position="74"/>
        <end position="75"/>
    </location>
    <ligand>
        <name>NAD(+)</name>
        <dbReference type="ChEBI" id="CHEBI:57540"/>
    </ligand>
</feature>
<feature type="binding site" evidence="1">
    <location>
        <begin position="111"/>
        <end position="112"/>
    </location>
    <ligand>
        <name>NAD(+)</name>
        <dbReference type="ChEBI" id="CHEBI:57540"/>
    </ligand>
</feature>
<feature type="binding site" evidence="1">
    <location>
        <begin position="139"/>
        <end position="140"/>
    </location>
    <ligand>
        <name>NAD(+)</name>
        <dbReference type="ChEBI" id="CHEBI:57540"/>
    </ligand>
</feature>
<feature type="binding site" evidence="1">
    <location>
        <position position="225"/>
    </location>
    <ligand>
        <name>substrate</name>
    </ligand>
</feature>
<feature type="binding site" evidence="1">
    <location>
        <position position="244"/>
    </location>
    <ligand>
        <name>NAD(+)</name>
        <dbReference type="ChEBI" id="CHEBI:57540"/>
    </ligand>
</feature>
<feature type="binding site" evidence="1">
    <location>
        <begin position="273"/>
        <end position="275"/>
    </location>
    <ligand>
        <name>NAD(+)</name>
        <dbReference type="ChEBI" id="CHEBI:57540"/>
    </ligand>
</feature>
<feature type="site" description="Plays an important role in discriminating NADH against NADPH" evidence="1">
    <location>
        <position position="75"/>
    </location>
</feature>
<evidence type="ECO:0000255" key="1">
    <source>
        <dbReference type="HAMAP-Rule" id="MF_01838"/>
    </source>
</evidence>
<name>FABV_COLP3</name>
<organism>
    <name type="scientific">Colwellia psychrerythraea (strain 34H / ATCC BAA-681)</name>
    <name type="common">Vibrio psychroerythus</name>
    <dbReference type="NCBI Taxonomy" id="167879"/>
    <lineage>
        <taxon>Bacteria</taxon>
        <taxon>Pseudomonadati</taxon>
        <taxon>Pseudomonadota</taxon>
        <taxon>Gammaproteobacteria</taxon>
        <taxon>Alteromonadales</taxon>
        <taxon>Colwelliaceae</taxon>
        <taxon>Colwellia</taxon>
    </lineage>
</organism>